<organism>
    <name type="scientific">Tragulus napu</name>
    <name type="common">Larger Malay chevrotain</name>
    <name type="synonym">Greater mouse deer</name>
    <dbReference type="NCBI Taxonomy" id="9848"/>
    <lineage>
        <taxon>Eukaryota</taxon>
        <taxon>Metazoa</taxon>
        <taxon>Chordata</taxon>
        <taxon>Craniata</taxon>
        <taxon>Vertebrata</taxon>
        <taxon>Euteleostomi</taxon>
        <taxon>Mammalia</taxon>
        <taxon>Eutheria</taxon>
        <taxon>Laurasiatheria</taxon>
        <taxon>Artiodactyla</taxon>
        <taxon>Ruminantia</taxon>
        <taxon>Tragulina</taxon>
        <taxon>Tragulidae</taxon>
        <taxon>Tragulus</taxon>
    </lineage>
</organism>
<geneLocation type="mitochondrion"/>
<evidence type="ECO:0000250" key="1"/>
<evidence type="ECO:0000250" key="2">
    <source>
        <dbReference type="UniProtKB" id="P00157"/>
    </source>
</evidence>
<evidence type="ECO:0000255" key="3">
    <source>
        <dbReference type="PROSITE-ProRule" id="PRU00967"/>
    </source>
</evidence>
<evidence type="ECO:0000255" key="4">
    <source>
        <dbReference type="PROSITE-ProRule" id="PRU00968"/>
    </source>
</evidence>
<feature type="chain" id="PRO_0000061678" description="Cytochrome b">
    <location>
        <begin position="1"/>
        <end position="379"/>
    </location>
</feature>
<feature type="transmembrane region" description="Helical" evidence="2">
    <location>
        <begin position="33"/>
        <end position="53"/>
    </location>
</feature>
<feature type="transmembrane region" description="Helical" evidence="2">
    <location>
        <begin position="77"/>
        <end position="98"/>
    </location>
</feature>
<feature type="transmembrane region" description="Helical" evidence="2">
    <location>
        <begin position="113"/>
        <end position="133"/>
    </location>
</feature>
<feature type="transmembrane region" description="Helical" evidence="2">
    <location>
        <begin position="178"/>
        <end position="198"/>
    </location>
</feature>
<feature type="transmembrane region" description="Helical" evidence="2">
    <location>
        <begin position="226"/>
        <end position="246"/>
    </location>
</feature>
<feature type="transmembrane region" description="Helical" evidence="2">
    <location>
        <begin position="288"/>
        <end position="308"/>
    </location>
</feature>
<feature type="transmembrane region" description="Helical" evidence="2">
    <location>
        <begin position="320"/>
        <end position="340"/>
    </location>
</feature>
<feature type="transmembrane region" description="Helical" evidence="2">
    <location>
        <begin position="347"/>
        <end position="367"/>
    </location>
</feature>
<feature type="binding site" description="axial binding residue" evidence="2">
    <location>
        <position position="83"/>
    </location>
    <ligand>
        <name>heme b</name>
        <dbReference type="ChEBI" id="CHEBI:60344"/>
        <label>b562</label>
    </ligand>
    <ligandPart>
        <name>Fe</name>
        <dbReference type="ChEBI" id="CHEBI:18248"/>
    </ligandPart>
</feature>
<feature type="binding site" description="axial binding residue" evidence="2">
    <location>
        <position position="97"/>
    </location>
    <ligand>
        <name>heme b</name>
        <dbReference type="ChEBI" id="CHEBI:60344"/>
        <label>b566</label>
    </ligand>
    <ligandPart>
        <name>Fe</name>
        <dbReference type="ChEBI" id="CHEBI:18248"/>
    </ligandPart>
</feature>
<feature type="binding site" description="axial binding residue" evidence="2">
    <location>
        <position position="182"/>
    </location>
    <ligand>
        <name>heme b</name>
        <dbReference type="ChEBI" id="CHEBI:60344"/>
        <label>b562</label>
    </ligand>
    <ligandPart>
        <name>Fe</name>
        <dbReference type="ChEBI" id="CHEBI:18248"/>
    </ligandPart>
</feature>
<feature type="binding site" description="axial binding residue" evidence="2">
    <location>
        <position position="196"/>
    </location>
    <ligand>
        <name>heme b</name>
        <dbReference type="ChEBI" id="CHEBI:60344"/>
        <label>b566</label>
    </ligand>
    <ligandPart>
        <name>Fe</name>
        <dbReference type="ChEBI" id="CHEBI:18248"/>
    </ligandPart>
</feature>
<feature type="binding site" evidence="2">
    <location>
        <position position="201"/>
    </location>
    <ligand>
        <name>a ubiquinone</name>
        <dbReference type="ChEBI" id="CHEBI:16389"/>
    </ligand>
</feature>
<proteinExistence type="inferred from homology"/>
<keyword id="KW-0249">Electron transport</keyword>
<keyword id="KW-0349">Heme</keyword>
<keyword id="KW-0408">Iron</keyword>
<keyword id="KW-0472">Membrane</keyword>
<keyword id="KW-0479">Metal-binding</keyword>
<keyword id="KW-0496">Mitochondrion</keyword>
<keyword id="KW-0999">Mitochondrion inner membrane</keyword>
<keyword id="KW-0679">Respiratory chain</keyword>
<keyword id="KW-0812">Transmembrane</keyword>
<keyword id="KW-1133">Transmembrane helix</keyword>
<keyword id="KW-0813">Transport</keyword>
<keyword id="KW-0830">Ubiquinone</keyword>
<reference key="1">
    <citation type="journal article" date="1991" name="J. Mol. Evol.">
        <title>Evolution of the cytochrome b gene of mammals.</title>
        <authorList>
            <person name="Irwin D.M."/>
            <person name="Kocher T.D."/>
            <person name="Wilson A.C."/>
        </authorList>
    </citation>
    <scope>NUCLEOTIDE SEQUENCE [GENOMIC DNA]</scope>
</reference>
<comment type="function">
    <text evidence="2">Component of the ubiquinol-cytochrome c reductase complex (complex III or cytochrome b-c1 complex) that is part of the mitochondrial respiratory chain. The b-c1 complex mediates electron transfer from ubiquinol to cytochrome c. Contributes to the generation of a proton gradient across the mitochondrial membrane that is then used for ATP synthesis.</text>
</comment>
<comment type="cofactor">
    <cofactor evidence="2">
        <name>heme b</name>
        <dbReference type="ChEBI" id="CHEBI:60344"/>
    </cofactor>
    <text evidence="2">Binds 2 heme b groups non-covalently.</text>
</comment>
<comment type="subunit">
    <text evidence="2">The cytochrome bc1 complex contains 11 subunits: 3 respiratory subunits (MT-CYB, CYC1 and UQCRFS1), 2 core proteins (UQCRC1 and UQCRC2) and 6 low-molecular weight proteins (UQCRH/QCR6, UQCRB/QCR7, UQCRQ/QCR8, UQCR10/QCR9, UQCR11/QCR10 and a cleavage product of UQCRFS1). This cytochrome bc1 complex then forms a dimer.</text>
</comment>
<comment type="subcellular location">
    <subcellularLocation>
        <location evidence="2">Mitochondrion inner membrane</location>
        <topology evidence="2">Multi-pass membrane protein</topology>
    </subcellularLocation>
</comment>
<comment type="miscellaneous">
    <text evidence="1">Heme 1 (or BL or b562) is low-potential and absorbs at about 562 nm, and heme 2 (or BH or b566) is high-potential and absorbs at about 566 nm.</text>
</comment>
<comment type="similarity">
    <text evidence="3 4">Belongs to the cytochrome b family.</text>
</comment>
<comment type="caution">
    <text evidence="2">The full-length protein contains only eight transmembrane helices, not nine as predicted by bioinformatics tools.</text>
</comment>
<protein>
    <recommendedName>
        <fullName>Cytochrome b</fullName>
    </recommendedName>
    <alternativeName>
        <fullName>Complex III subunit 3</fullName>
    </alternativeName>
    <alternativeName>
        <fullName>Complex III subunit III</fullName>
    </alternativeName>
    <alternativeName>
        <fullName>Cytochrome b-c1 complex subunit 3</fullName>
    </alternativeName>
    <alternativeName>
        <fullName>Ubiquinol-cytochrome-c reductase complex cytochrome b subunit</fullName>
    </alternativeName>
</protein>
<accession>P24965</accession>
<name>CYB_TRANA</name>
<sequence length="379" mass="42581">MINIRKSHPLMKIVNNAFIDLPAPSNISSWWNFGSLLGICLILQILTGLFLAMHYTSDTSTAFSSVTHICRDVNYGWIIRYMHANGASMFFICLYMHVGRGLYYGSYTFLETWNIGVILLLTVMATAFMGYVLPWGQMSFWGATVITNLLSAIPYIGTELVEWIWGGFSVDKATLTRFFAFHFILPFVITALALVHLLFLHETGSNNPTGIPSDADKIPFHPYYTIKDVLGALVLMLVLLLLVLFSPDLLGDPDNYTPANPLNTPPHIKPEWYFLFAYAILRSIPNKLGGVLALIASILILQLMPLLHTSKQRSMMFRPISQCLFWLLAADLLTLTWIGGQPVEHPYVVIGQLASILYFSIILVLMPVAGVIENKMLKW</sequence>
<gene>
    <name type="primary">MT-CYB</name>
    <name type="synonym">COB</name>
    <name type="synonym">CYTB</name>
    <name type="synonym">MTCYB</name>
</gene>
<dbReference type="EMBL" id="X56288">
    <property type="protein sequence ID" value="CAA39735.1"/>
    <property type="molecule type" value="Genomic_DNA"/>
</dbReference>
<dbReference type="PIR" id="S17419">
    <property type="entry name" value="S17419"/>
</dbReference>
<dbReference type="SMR" id="P24965"/>
<dbReference type="GO" id="GO:0005743">
    <property type="term" value="C:mitochondrial inner membrane"/>
    <property type="evidence" value="ECO:0007669"/>
    <property type="project" value="UniProtKB-SubCell"/>
</dbReference>
<dbReference type="GO" id="GO:0045275">
    <property type="term" value="C:respiratory chain complex III"/>
    <property type="evidence" value="ECO:0007669"/>
    <property type="project" value="InterPro"/>
</dbReference>
<dbReference type="GO" id="GO:0046872">
    <property type="term" value="F:metal ion binding"/>
    <property type="evidence" value="ECO:0007669"/>
    <property type="project" value="UniProtKB-KW"/>
</dbReference>
<dbReference type="GO" id="GO:0008121">
    <property type="term" value="F:ubiquinol-cytochrome-c reductase activity"/>
    <property type="evidence" value="ECO:0007669"/>
    <property type="project" value="InterPro"/>
</dbReference>
<dbReference type="GO" id="GO:0006122">
    <property type="term" value="P:mitochondrial electron transport, ubiquinol to cytochrome c"/>
    <property type="evidence" value="ECO:0007669"/>
    <property type="project" value="TreeGrafter"/>
</dbReference>
<dbReference type="CDD" id="cd00290">
    <property type="entry name" value="cytochrome_b_C"/>
    <property type="match status" value="1"/>
</dbReference>
<dbReference type="CDD" id="cd00284">
    <property type="entry name" value="Cytochrome_b_N"/>
    <property type="match status" value="1"/>
</dbReference>
<dbReference type="FunFam" id="1.20.810.10:FF:000002">
    <property type="entry name" value="Cytochrome b"/>
    <property type="match status" value="1"/>
</dbReference>
<dbReference type="Gene3D" id="1.20.810.10">
    <property type="entry name" value="Cytochrome Bc1 Complex, Chain C"/>
    <property type="match status" value="1"/>
</dbReference>
<dbReference type="InterPro" id="IPR005798">
    <property type="entry name" value="Cyt_b/b6_C"/>
</dbReference>
<dbReference type="InterPro" id="IPR036150">
    <property type="entry name" value="Cyt_b/b6_C_sf"/>
</dbReference>
<dbReference type="InterPro" id="IPR005797">
    <property type="entry name" value="Cyt_b/b6_N"/>
</dbReference>
<dbReference type="InterPro" id="IPR027387">
    <property type="entry name" value="Cytb/b6-like_sf"/>
</dbReference>
<dbReference type="InterPro" id="IPR030689">
    <property type="entry name" value="Cytochrome_b"/>
</dbReference>
<dbReference type="InterPro" id="IPR048260">
    <property type="entry name" value="Cytochrome_b_C_euk/bac"/>
</dbReference>
<dbReference type="InterPro" id="IPR048259">
    <property type="entry name" value="Cytochrome_b_N_euk/bac"/>
</dbReference>
<dbReference type="InterPro" id="IPR016174">
    <property type="entry name" value="Di-haem_cyt_TM"/>
</dbReference>
<dbReference type="PANTHER" id="PTHR19271">
    <property type="entry name" value="CYTOCHROME B"/>
    <property type="match status" value="1"/>
</dbReference>
<dbReference type="PANTHER" id="PTHR19271:SF16">
    <property type="entry name" value="CYTOCHROME B"/>
    <property type="match status" value="1"/>
</dbReference>
<dbReference type="Pfam" id="PF00032">
    <property type="entry name" value="Cytochrom_B_C"/>
    <property type="match status" value="1"/>
</dbReference>
<dbReference type="Pfam" id="PF00033">
    <property type="entry name" value="Cytochrome_B"/>
    <property type="match status" value="1"/>
</dbReference>
<dbReference type="PIRSF" id="PIRSF038885">
    <property type="entry name" value="COB"/>
    <property type="match status" value="1"/>
</dbReference>
<dbReference type="SUPFAM" id="SSF81648">
    <property type="entry name" value="a domain/subunit of cytochrome bc1 complex (Ubiquinol-cytochrome c reductase)"/>
    <property type="match status" value="1"/>
</dbReference>
<dbReference type="SUPFAM" id="SSF81342">
    <property type="entry name" value="Transmembrane di-heme cytochromes"/>
    <property type="match status" value="1"/>
</dbReference>
<dbReference type="PROSITE" id="PS51003">
    <property type="entry name" value="CYTB_CTER"/>
    <property type="match status" value="1"/>
</dbReference>
<dbReference type="PROSITE" id="PS51002">
    <property type="entry name" value="CYTB_NTER"/>
    <property type="match status" value="1"/>
</dbReference>